<organism>
    <name type="scientific">Rickettsia felis (strain ATCC VR-1525 / URRWXCal2)</name>
    <name type="common">Rickettsia azadi</name>
    <dbReference type="NCBI Taxonomy" id="315456"/>
    <lineage>
        <taxon>Bacteria</taxon>
        <taxon>Pseudomonadati</taxon>
        <taxon>Pseudomonadota</taxon>
        <taxon>Alphaproteobacteria</taxon>
        <taxon>Rickettsiales</taxon>
        <taxon>Rickettsiaceae</taxon>
        <taxon>Rickettsieae</taxon>
        <taxon>Rickettsia</taxon>
        <taxon>spotted fever group</taxon>
    </lineage>
</organism>
<protein>
    <recommendedName>
        <fullName evidence="1">Large ribosomal subunit protein uL4</fullName>
    </recommendedName>
    <alternativeName>
        <fullName evidence="3">50S ribosomal protein L4</fullName>
    </alternativeName>
</protein>
<accession>Q4UMS8</accession>
<keyword id="KW-0687">Ribonucleoprotein</keyword>
<keyword id="KW-0689">Ribosomal protein</keyword>
<keyword id="KW-0694">RNA-binding</keyword>
<keyword id="KW-0699">rRNA-binding</keyword>
<gene>
    <name evidence="1" type="primary">rplD</name>
    <name type="ordered locus">RF_0279</name>
</gene>
<feature type="chain" id="PRO_0000242430" description="Large ribosomal subunit protein uL4">
    <location>
        <begin position="1"/>
        <end position="207"/>
    </location>
</feature>
<feature type="region of interest" description="Disordered" evidence="2">
    <location>
        <begin position="50"/>
        <end position="75"/>
    </location>
</feature>
<comment type="function">
    <text evidence="1">One of the primary rRNA binding proteins, this protein initially binds near the 5'-end of the 23S rRNA. It is important during the early stages of 50S assembly. It makes multiple contacts with different domains of the 23S rRNA in the assembled 50S subunit and ribosome.</text>
</comment>
<comment type="function">
    <text evidence="1">Forms part of the polypeptide exit tunnel.</text>
</comment>
<comment type="subunit">
    <text evidence="1">Part of the 50S ribosomal subunit.</text>
</comment>
<comment type="similarity">
    <text evidence="1">Belongs to the universal ribosomal protein uL4 family.</text>
</comment>
<sequence length="207" mass="23009">MKTKILSLANEEVGEISLNEDIFAVEFIRDDIIKQVIDWQRAKAMSGNHKTKTVSEVSGTTKKPFKQKGTGNARQGSLRSVQMRGGGVAHGPRVRSHATKLPKKVRKLGLIHALSEKFAEGKLLVIDSLKLDKPKTSVLVNILNKFQGKSFFVIDGNEVDTNFSLAAKNIYNTVIVPQIGANVYDIIRHEYVLLSQEAVSVLEERLR</sequence>
<proteinExistence type="inferred from homology"/>
<dbReference type="EMBL" id="CP000053">
    <property type="protein sequence ID" value="AAY61130.1"/>
    <property type="molecule type" value="Genomic_DNA"/>
</dbReference>
<dbReference type="SMR" id="Q4UMS8"/>
<dbReference type="STRING" id="315456.RF_0279"/>
<dbReference type="KEGG" id="rfe:RF_0279"/>
<dbReference type="eggNOG" id="COG0088">
    <property type="taxonomic scope" value="Bacteria"/>
</dbReference>
<dbReference type="HOGENOM" id="CLU_041575_5_1_5"/>
<dbReference type="OrthoDB" id="9803201at2"/>
<dbReference type="Proteomes" id="UP000008548">
    <property type="component" value="Chromosome"/>
</dbReference>
<dbReference type="GO" id="GO:1990904">
    <property type="term" value="C:ribonucleoprotein complex"/>
    <property type="evidence" value="ECO:0007669"/>
    <property type="project" value="UniProtKB-KW"/>
</dbReference>
<dbReference type="GO" id="GO:0005840">
    <property type="term" value="C:ribosome"/>
    <property type="evidence" value="ECO:0007669"/>
    <property type="project" value="UniProtKB-KW"/>
</dbReference>
<dbReference type="GO" id="GO:0019843">
    <property type="term" value="F:rRNA binding"/>
    <property type="evidence" value="ECO:0007669"/>
    <property type="project" value="UniProtKB-UniRule"/>
</dbReference>
<dbReference type="GO" id="GO:0003735">
    <property type="term" value="F:structural constituent of ribosome"/>
    <property type="evidence" value="ECO:0007669"/>
    <property type="project" value="InterPro"/>
</dbReference>
<dbReference type="GO" id="GO:0006412">
    <property type="term" value="P:translation"/>
    <property type="evidence" value="ECO:0007669"/>
    <property type="project" value="UniProtKB-UniRule"/>
</dbReference>
<dbReference type="FunFam" id="3.40.1370.10:FF:000015">
    <property type="entry name" value="50S ribosomal protein L4"/>
    <property type="match status" value="1"/>
</dbReference>
<dbReference type="Gene3D" id="3.40.1370.10">
    <property type="match status" value="1"/>
</dbReference>
<dbReference type="HAMAP" id="MF_01328_B">
    <property type="entry name" value="Ribosomal_uL4_B"/>
    <property type="match status" value="1"/>
</dbReference>
<dbReference type="InterPro" id="IPR002136">
    <property type="entry name" value="Ribosomal_uL4"/>
</dbReference>
<dbReference type="InterPro" id="IPR013005">
    <property type="entry name" value="Ribosomal_uL4-like"/>
</dbReference>
<dbReference type="InterPro" id="IPR023574">
    <property type="entry name" value="Ribosomal_uL4_dom_sf"/>
</dbReference>
<dbReference type="NCBIfam" id="TIGR03953">
    <property type="entry name" value="rplD_bact"/>
    <property type="match status" value="1"/>
</dbReference>
<dbReference type="PANTHER" id="PTHR10746">
    <property type="entry name" value="50S RIBOSOMAL PROTEIN L4"/>
    <property type="match status" value="1"/>
</dbReference>
<dbReference type="PANTHER" id="PTHR10746:SF6">
    <property type="entry name" value="LARGE RIBOSOMAL SUBUNIT PROTEIN UL4M"/>
    <property type="match status" value="1"/>
</dbReference>
<dbReference type="Pfam" id="PF00573">
    <property type="entry name" value="Ribosomal_L4"/>
    <property type="match status" value="1"/>
</dbReference>
<dbReference type="SUPFAM" id="SSF52166">
    <property type="entry name" value="Ribosomal protein L4"/>
    <property type="match status" value="1"/>
</dbReference>
<reference key="1">
    <citation type="journal article" date="2005" name="PLoS Biol.">
        <title>The genome sequence of Rickettsia felis identifies the first putative conjugative plasmid in an obligate intracellular parasite.</title>
        <authorList>
            <person name="Ogata H."/>
            <person name="Renesto P."/>
            <person name="Audic S."/>
            <person name="Robert C."/>
            <person name="Blanc G."/>
            <person name="Fournier P.-E."/>
            <person name="Parinello H."/>
            <person name="Claverie J.-M."/>
            <person name="Raoult D."/>
        </authorList>
    </citation>
    <scope>NUCLEOTIDE SEQUENCE [LARGE SCALE GENOMIC DNA]</scope>
    <source>
        <strain>ATCC VR-1525 / URRWXCal2</strain>
    </source>
</reference>
<evidence type="ECO:0000255" key="1">
    <source>
        <dbReference type="HAMAP-Rule" id="MF_01328"/>
    </source>
</evidence>
<evidence type="ECO:0000256" key="2">
    <source>
        <dbReference type="SAM" id="MobiDB-lite"/>
    </source>
</evidence>
<evidence type="ECO:0000305" key="3"/>
<name>RL4_RICFE</name>